<gene>
    <name evidence="9 12" type="primary">Nle</name>
    <name type="ORF">CG2863</name>
</gene>
<reference evidence="9" key="1">
    <citation type="journal article" date="2000" name="Science">
        <title>The genome sequence of Drosophila melanogaster.</title>
        <authorList>
            <person name="Adams M.D."/>
            <person name="Celniker S.E."/>
            <person name="Holt R.A."/>
            <person name="Evans C.A."/>
            <person name="Gocayne J.D."/>
            <person name="Amanatides P.G."/>
            <person name="Scherer S.E."/>
            <person name="Li P.W."/>
            <person name="Hoskins R.A."/>
            <person name="Galle R.F."/>
            <person name="George R.A."/>
            <person name="Lewis S.E."/>
            <person name="Richards S."/>
            <person name="Ashburner M."/>
            <person name="Henderson S.N."/>
            <person name="Sutton G.G."/>
            <person name="Wortman J.R."/>
            <person name="Yandell M.D."/>
            <person name="Zhang Q."/>
            <person name="Chen L.X."/>
            <person name="Brandon R.C."/>
            <person name="Rogers Y.-H.C."/>
            <person name="Blazej R.G."/>
            <person name="Champe M."/>
            <person name="Pfeiffer B.D."/>
            <person name="Wan K.H."/>
            <person name="Doyle C."/>
            <person name="Baxter E.G."/>
            <person name="Helt G."/>
            <person name="Nelson C.R."/>
            <person name="Miklos G.L.G."/>
            <person name="Abril J.F."/>
            <person name="Agbayani A."/>
            <person name="An H.-J."/>
            <person name="Andrews-Pfannkoch C."/>
            <person name="Baldwin D."/>
            <person name="Ballew R.M."/>
            <person name="Basu A."/>
            <person name="Baxendale J."/>
            <person name="Bayraktaroglu L."/>
            <person name="Beasley E.M."/>
            <person name="Beeson K.Y."/>
            <person name="Benos P.V."/>
            <person name="Berman B.P."/>
            <person name="Bhandari D."/>
            <person name="Bolshakov S."/>
            <person name="Borkova D."/>
            <person name="Botchan M.R."/>
            <person name="Bouck J."/>
            <person name="Brokstein P."/>
            <person name="Brottier P."/>
            <person name="Burtis K.C."/>
            <person name="Busam D.A."/>
            <person name="Butler H."/>
            <person name="Cadieu E."/>
            <person name="Center A."/>
            <person name="Chandra I."/>
            <person name="Cherry J.M."/>
            <person name="Cawley S."/>
            <person name="Dahlke C."/>
            <person name="Davenport L.B."/>
            <person name="Davies P."/>
            <person name="de Pablos B."/>
            <person name="Delcher A."/>
            <person name="Deng Z."/>
            <person name="Mays A.D."/>
            <person name="Dew I."/>
            <person name="Dietz S.M."/>
            <person name="Dodson K."/>
            <person name="Doup L.E."/>
            <person name="Downes M."/>
            <person name="Dugan-Rocha S."/>
            <person name="Dunkov B.C."/>
            <person name="Dunn P."/>
            <person name="Durbin K.J."/>
            <person name="Evangelista C.C."/>
            <person name="Ferraz C."/>
            <person name="Ferriera S."/>
            <person name="Fleischmann W."/>
            <person name="Fosler C."/>
            <person name="Gabrielian A.E."/>
            <person name="Garg N.S."/>
            <person name="Gelbart W.M."/>
            <person name="Glasser K."/>
            <person name="Glodek A."/>
            <person name="Gong F."/>
            <person name="Gorrell J.H."/>
            <person name="Gu Z."/>
            <person name="Guan P."/>
            <person name="Harris M."/>
            <person name="Harris N.L."/>
            <person name="Harvey D.A."/>
            <person name="Heiman T.J."/>
            <person name="Hernandez J.R."/>
            <person name="Houck J."/>
            <person name="Hostin D."/>
            <person name="Houston K.A."/>
            <person name="Howland T.J."/>
            <person name="Wei M.-H."/>
            <person name="Ibegwam C."/>
            <person name="Jalali M."/>
            <person name="Kalush F."/>
            <person name="Karpen G.H."/>
            <person name="Ke Z."/>
            <person name="Kennison J.A."/>
            <person name="Ketchum K.A."/>
            <person name="Kimmel B.E."/>
            <person name="Kodira C.D."/>
            <person name="Kraft C.L."/>
            <person name="Kravitz S."/>
            <person name="Kulp D."/>
            <person name="Lai Z."/>
            <person name="Lasko P."/>
            <person name="Lei Y."/>
            <person name="Levitsky A.A."/>
            <person name="Li J.H."/>
            <person name="Li Z."/>
            <person name="Liang Y."/>
            <person name="Lin X."/>
            <person name="Liu X."/>
            <person name="Mattei B."/>
            <person name="McIntosh T.C."/>
            <person name="McLeod M.P."/>
            <person name="McPherson D."/>
            <person name="Merkulov G."/>
            <person name="Milshina N.V."/>
            <person name="Mobarry C."/>
            <person name="Morris J."/>
            <person name="Moshrefi A."/>
            <person name="Mount S.M."/>
            <person name="Moy M."/>
            <person name="Murphy B."/>
            <person name="Murphy L."/>
            <person name="Muzny D.M."/>
            <person name="Nelson D.L."/>
            <person name="Nelson D.R."/>
            <person name="Nelson K.A."/>
            <person name="Nixon K."/>
            <person name="Nusskern D.R."/>
            <person name="Pacleb J.M."/>
            <person name="Palazzolo M."/>
            <person name="Pittman G.S."/>
            <person name="Pan S."/>
            <person name="Pollard J."/>
            <person name="Puri V."/>
            <person name="Reese M.G."/>
            <person name="Reinert K."/>
            <person name="Remington K."/>
            <person name="Saunders R.D.C."/>
            <person name="Scheeler F."/>
            <person name="Shen H."/>
            <person name="Shue B.C."/>
            <person name="Siden-Kiamos I."/>
            <person name="Simpson M."/>
            <person name="Skupski M.P."/>
            <person name="Smith T.J."/>
            <person name="Spier E."/>
            <person name="Spradling A.C."/>
            <person name="Stapleton M."/>
            <person name="Strong R."/>
            <person name="Sun E."/>
            <person name="Svirskas R."/>
            <person name="Tector C."/>
            <person name="Turner R."/>
            <person name="Venter E."/>
            <person name="Wang A.H."/>
            <person name="Wang X."/>
            <person name="Wang Z.-Y."/>
            <person name="Wassarman D.A."/>
            <person name="Weinstock G.M."/>
            <person name="Weissenbach J."/>
            <person name="Williams S.M."/>
            <person name="Woodage T."/>
            <person name="Worley K.C."/>
            <person name="Wu D."/>
            <person name="Yang S."/>
            <person name="Yao Q.A."/>
            <person name="Ye J."/>
            <person name="Yeh R.-F."/>
            <person name="Zaveri J.S."/>
            <person name="Zhan M."/>
            <person name="Zhang G."/>
            <person name="Zhao Q."/>
            <person name="Zheng L."/>
            <person name="Zheng X.H."/>
            <person name="Zhong F.N."/>
            <person name="Zhong W."/>
            <person name="Zhou X."/>
            <person name="Zhu S.C."/>
            <person name="Zhu X."/>
            <person name="Smith H.O."/>
            <person name="Gibbs R.A."/>
            <person name="Myers E.W."/>
            <person name="Rubin G.M."/>
            <person name="Venter J.C."/>
        </authorList>
    </citation>
    <scope>NUCLEOTIDE SEQUENCE [LARGE SCALE GENOMIC DNA]</scope>
    <source>
        <strain>Berkeley</strain>
    </source>
</reference>
<reference evidence="9" key="2">
    <citation type="journal article" date="2002" name="Genome Biol.">
        <title>Annotation of the Drosophila melanogaster euchromatic genome: a systematic review.</title>
        <authorList>
            <person name="Misra S."/>
            <person name="Crosby M.A."/>
            <person name="Mungall C.J."/>
            <person name="Matthews B.B."/>
            <person name="Campbell K.S."/>
            <person name="Hradecky P."/>
            <person name="Huang Y."/>
            <person name="Kaminker J.S."/>
            <person name="Millburn G.H."/>
            <person name="Prochnik S.E."/>
            <person name="Smith C.D."/>
            <person name="Tupy J.L."/>
            <person name="Whitfield E.J."/>
            <person name="Bayraktaroglu L."/>
            <person name="Berman B.P."/>
            <person name="Bettencourt B.R."/>
            <person name="Celniker S.E."/>
            <person name="de Grey A.D.N.J."/>
            <person name="Drysdale R.A."/>
            <person name="Harris N.L."/>
            <person name="Richter J."/>
            <person name="Russo S."/>
            <person name="Schroeder A.J."/>
            <person name="Shu S.Q."/>
            <person name="Stapleton M."/>
            <person name="Yamada C."/>
            <person name="Ashburner M."/>
            <person name="Gelbart W.M."/>
            <person name="Rubin G.M."/>
            <person name="Lewis S.E."/>
        </authorList>
    </citation>
    <scope>GENOME REANNOTATION</scope>
    <source>
        <strain>Berkeley</strain>
    </source>
</reference>
<reference evidence="10" key="3">
    <citation type="journal article" date="2002" name="Genome Biol.">
        <title>A Drosophila full-length cDNA resource.</title>
        <authorList>
            <person name="Stapleton M."/>
            <person name="Carlson J.W."/>
            <person name="Brokstein P."/>
            <person name="Yu C."/>
            <person name="Champe M."/>
            <person name="George R.A."/>
            <person name="Guarin H."/>
            <person name="Kronmiller B."/>
            <person name="Pacleb J.M."/>
            <person name="Park S."/>
            <person name="Wan K.H."/>
            <person name="Rubin G.M."/>
            <person name="Celniker S.E."/>
        </authorList>
    </citation>
    <scope>NUCLEOTIDE SEQUENCE [LARGE SCALE MRNA]</scope>
    <source>
        <strain evidence="5">Berkeley</strain>
        <tissue evidence="5">Testis</tissue>
    </source>
</reference>
<reference evidence="8 11" key="4">
    <citation type="journal article" date="1998" name="EMBO J.">
        <title>Notchless encodes a novel WD40-repeat-containing protein that modulates Notch signaling activity.</title>
        <authorList>
            <person name="Royet J."/>
            <person name="Bouwmeester T."/>
            <person name="Cohen S.M."/>
        </authorList>
    </citation>
    <scope>NUCLEOTIDE SEQUENCE [MRNA] OF 8-488</scope>
    <scope>FUNCTION</scope>
    <scope>INTERACTION WITH NOTCH</scope>
</reference>
<feature type="chain" id="PRO_0000424662" description="Protein Notchless">
    <location>
        <begin position="1"/>
        <end position="488"/>
    </location>
</feature>
<feature type="repeat" description="WD 1" evidence="3">
    <location>
        <begin position="117"/>
        <end position="156"/>
    </location>
</feature>
<feature type="repeat" description="WD 2" evidence="3">
    <location>
        <begin position="159"/>
        <end position="198"/>
    </location>
</feature>
<feature type="repeat" description="WD 3" evidence="3">
    <location>
        <begin position="202"/>
        <end position="246"/>
    </location>
</feature>
<feature type="repeat" description="WD 4" evidence="3">
    <location>
        <begin position="249"/>
        <end position="287"/>
    </location>
</feature>
<feature type="repeat" description="WD 5" evidence="3">
    <location>
        <begin position="329"/>
        <end position="370"/>
    </location>
</feature>
<feature type="repeat" description="WD 6" evidence="3">
    <location>
        <begin position="373"/>
        <end position="412"/>
    </location>
</feature>
<feature type="repeat" description="WD 7" evidence="3">
    <location>
        <begin position="415"/>
        <end position="454"/>
    </location>
</feature>
<feature type="repeat" description="WD 8" evidence="3">
    <location>
        <begin position="457"/>
        <end position="488"/>
    </location>
</feature>
<feature type="region of interest" description="Disordered" evidence="4">
    <location>
        <begin position="1"/>
        <end position="22"/>
    </location>
</feature>
<feature type="region of interest" description="Ubiquitin-like (UBL) domain" evidence="2">
    <location>
        <begin position="19"/>
        <end position="101"/>
    </location>
</feature>
<feature type="sequence conflict" description="In Ref. 4; CAA10070." evidence="8" ref="4">
    <original>SD</original>
    <variation>Y</variation>
    <location>
        <begin position="28"/>
        <end position="29"/>
    </location>
</feature>
<feature type="sequence conflict" description="In Ref. 4; CAA10070." evidence="8" ref="4">
    <original>H</original>
    <variation>Q</variation>
    <location>
        <position position="291"/>
    </location>
</feature>
<accession>Q9VPR4</accession>
<accession>O96995</accession>
<accession>Q8T4A2</accession>
<comment type="function">
    <text evidence="6">Plays a role in regulating Notch activity.</text>
</comment>
<comment type="subunit">
    <text evidence="2 6">Interacts with Notch (via cytoplasmic domain) (PubMed:9857191). Associates with the pre-60S ribosomal particle (By similarity).</text>
</comment>
<comment type="subcellular location">
    <subcellularLocation>
        <location evidence="1">Nucleus</location>
        <location evidence="1">Nucleolus</location>
    </subcellularLocation>
</comment>
<comment type="miscellaneous">
    <text evidence="7">The name 'Notchless' derives from the ability to suppress the wing notching caused by some Notch mutant alleles.</text>
</comment>
<comment type="similarity">
    <text evidence="3">Belongs to the NLE1/RSA4 family.</text>
</comment>
<dbReference type="EMBL" id="AE014134">
    <property type="protein sequence ID" value="AAF51479.2"/>
    <property type="molecule type" value="Genomic_DNA"/>
</dbReference>
<dbReference type="EMBL" id="AY089286">
    <property type="protein sequence ID" value="AAL90024.1"/>
    <property type="molecule type" value="mRNA"/>
</dbReference>
<dbReference type="EMBL" id="AJ012588">
    <property type="protein sequence ID" value="CAA10070.1"/>
    <property type="molecule type" value="mRNA"/>
</dbReference>
<dbReference type="RefSeq" id="NP_477294.2">
    <property type="nucleotide sequence ID" value="NM_057946.4"/>
</dbReference>
<dbReference type="SMR" id="Q9VPR4"/>
<dbReference type="BioGRID" id="59490">
    <property type="interactions" value="6"/>
</dbReference>
<dbReference type="FunCoup" id="Q9VPR4">
    <property type="interactions" value="1432"/>
</dbReference>
<dbReference type="IntAct" id="Q9VPR4">
    <property type="interactions" value="3"/>
</dbReference>
<dbReference type="STRING" id="7227.FBpp0077735"/>
<dbReference type="PaxDb" id="7227-FBpp0077735"/>
<dbReference type="DNASU" id="33234"/>
<dbReference type="EnsemblMetazoa" id="FBtr0078075">
    <property type="protein sequence ID" value="FBpp0077735"/>
    <property type="gene ID" value="FBgn0021874"/>
</dbReference>
<dbReference type="GeneID" id="33234"/>
<dbReference type="KEGG" id="dme:Dmel_CG2863"/>
<dbReference type="UCSC" id="CG2863-RA">
    <property type="organism name" value="d. melanogaster"/>
</dbReference>
<dbReference type="AGR" id="FB:FBgn0021874"/>
<dbReference type="CTD" id="33234"/>
<dbReference type="FlyBase" id="FBgn0021874">
    <property type="gene designation" value="Nle"/>
</dbReference>
<dbReference type="VEuPathDB" id="VectorBase:FBgn0021874"/>
<dbReference type="eggNOG" id="KOG0271">
    <property type="taxonomic scope" value="Eukaryota"/>
</dbReference>
<dbReference type="GeneTree" id="ENSGT00940000157881"/>
<dbReference type="HOGENOM" id="CLU_000288_57_16_1"/>
<dbReference type="InParanoid" id="Q9VPR4"/>
<dbReference type="OMA" id="AWEPYHR"/>
<dbReference type="OrthoDB" id="10267436at2759"/>
<dbReference type="PhylomeDB" id="Q9VPR4"/>
<dbReference type="SignaLink" id="Q9VPR4"/>
<dbReference type="BioGRID-ORCS" id="33234">
    <property type="hits" value="0 hits in 1 CRISPR screen"/>
</dbReference>
<dbReference type="GenomeRNAi" id="33234"/>
<dbReference type="PRO" id="PR:Q9VPR4"/>
<dbReference type="Proteomes" id="UP000000803">
    <property type="component" value="Chromosome 2L"/>
</dbReference>
<dbReference type="Bgee" id="FBgn0021874">
    <property type="expression patterns" value="Expressed in eye disc (Drosophila) and 59 other cell types or tissues"/>
</dbReference>
<dbReference type="GO" id="GO:0005730">
    <property type="term" value="C:nucleolus"/>
    <property type="evidence" value="ECO:0000318"/>
    <property type="project" value="GO_Central"/>
</dbReference>
<dbReference type="GO" id="GO:0005112">
    <property type="term" value="F:Notch binding"/>
    <property type="evidence" value="ECO:0000314"/>
    <property type="project" value="FlyBase"/>
</dbReference>
<dbReference type="GO" id="GO:0045746">
    <property type="term" value="P:negative regulation of Notch signaling pathway"/>
    <property type="evidence" value="ECO:0000315"/>
    <property type="project" value="FlyBase"/>
</dbReference>
<dbReference type="GO" id="GO:0007219">
    <property type="term" value="P:Notch signaling pathway"/>
    <property type="evidence" value="ECO:0007669"/>
    <property type="project" value="UniProtKB-KW"/>
</dbReference>
<dbReference type="GO" id="GO:0045747">
    <property type="term" value="P:positive regulation of Notch signaling pathway"/>
    <property type="evidence" value="ECO:0000315"/>
    <property type="project" value="FlyBase"/>
</dbReference>
<dbReference type="GO" id="GO:0008593">
    <property type="term" value="P:regulation of Notch signaling pathway"/>
    <property type="evidence" value="ECO:0000318"/>
    <property type="project" value="GO_Central"/>
</dbReference>
<dbReference type="CDD" id="cd00200">
    <property type="entry name" value="WD40"/>
    <property type="match status" value="1"/>
</dbReference>
<dbReference type="FunFam" id="2.130.10.10:FF:000092">
    <property type="entry name" value="notchless protein homolog"/>
    <property type="match status" value="1"/>
</dbReference>
<dbReference type="Gene3D" id="2.130.10.10">
    <property type="entry name" value="YVTN repeat-like/Quinoprotein amine dehydrogenase"/>
    <property type="match status" value="1"/>
</dbReference>
<dbReference type="InterPro" id="IPR020472">
    <property type="entry name" value="G-protein_beta_WD-40_rep"/>
</dbReference>
<dbReference type="InterPro" id="IPR001632">
    <property type="entry name" value="Gprotein_B"/>
</dbReference>
<dbReference type="InterPro" id="IPR012972">
    <property type="entry name" value="NLE"/>
</dbReference>
<dbReference type="InterPro" id="IPR015943">
    <property type="entry name" value="WD40/YVTN_repeat-like_dom_sf"/>
</dbReference>
<dbReference type="InterPro" id="IPR019775">
    <property type="entry name" value="WD40_repeat_CS"/>
</dbReference>
<dbReference type="InterPro" id="IPR036322">
    <property type="entry name" value="WD40_repeat_dom_sf"/>
</dbReference>
<dbReference type="InterPro" id="IPR001680">
    <property type="entry name" value="WD40_rpt"/>
</dbReference>
<dbReference type="PANTHER" id="PTHR19848:SF0">
    <property type="entry name" value="NOTCHLESS PROTEIN HOMOLOG 1"/>
    <property type="match status" value="1"/>
</dbReference>
<dbReference type="PANTHER" id="PTHR19848">
    <property type="entry name" value="WD40 REPEAT PROTEIN"/>
    <property type="match status" value="1"/>
</dbReference>
<dbReference type="Pfam" id="PF08154">
    <property type="entry name" value="NLE"/>
    <property type="match status" value="1"/>
</dbReference>
<dbReference type="Pfam" id="PF00400">
    <property type="entry name" value="WD40"/>
    <property type="match status" value="7"/>
</dbReference>
<dbReference type="PRINTS" id="PR00319">
    <property type="entry name" value="GPROTEINB"/>
</dbReference>
<dbReference type="PRINTS" id="PR00320">
    <property type="entry name" value="GPROTEINBRPT"/>
</dbReference>
<dbReference type="SMART" id="SM00320">
    <property type="entry name" value="WD40"/>
    <property type="match status" value="8"/>
</dbReference>
<dbReference type="SUPFAM" id="SSF50978">
    <property type="entry name" value="WD40 repeat-like"/>
    <property type="match status" value="1"/>
</dbReference>
<dbReference type="PROSITE" id="PS00678">
    <property type="entry name" value="WD_REPEATS_1"/>
    <property type="match status" value="2"/>
</dbReference>
<dbReference type="PROSITE" id="PS50082">
    <property type="entry name" value="WD_REPEATS_2"/>
    <property type="match status" value="7"/>
</dbReference>
<dbReference type="PROSITE" id="PS50294">
    <property type="entry name" value="WD_REPEATS_REGION"/>
    <property type="match status" value="1"/>
</dbReference>
<proteinExistence type="evidence at protein level"/>
<organism>
    <name type="scientific">Drosophila melanogaster</name>
    <name type="common">Fruit fly</name>
    <dbReference type="NCBI Taxonomy" id="7227"/>
    <lineage>
        <taxon>Eukaryota</taxon>
        <taxon>Metazoa</taxon>
        <taxon>Ecdysozoa</taxon>
        <taxon>Arthropoda</taxon>
        <taxon>Hexapoda</taxon>
        <taxon>Insecta</taxon>
        <taxon>Pterygota</taxon>
        <taxon>Neoptera</taxon>
        <taxon>Endopterygota</taxon>
        <taxon>Diptera</taxon>
        <taxon>Brachycera</taxon>
        <taxon>Muscomorpha</taxon>
        <taxon>Ephydroidea</taxon>
        <taxon>Drosophilidae</taxon>
        <taxon>Drosophila</taxon>
        <taxon>Sophophora</taxon>
    </lineage>
</organism>
<sequence length="488" mass="53810">MLAKKQKMQETDTEQEATPHTIQARLVSDTGEEAGPPIDLPAGITTQQLGLICNALLKNEEATPYLFFVGEDEIKKSLEDTLDLASVDTENVIDIVYQPQAVFKVRPVTRCTSSMPGHAEAVVSLNFSPDGAHLASGSGDTTVRLWDLNTETPHFTCTGHKQWVLCVSWAPDGKRLASGCKAGSIIIWDPETGQQKGRPLSGHKKHINCLAWEPYHRDPECRKLASASGDGDCRIWDVKLGQCLMNIAGHTNAVTAVRWGGAGLIYTSSKDRTVKMWRAADGILCRTFSGHAHWVNNIALSTDYVLRTGPFHPVKDRSKSHLSLSTEELQESALKRYQAVCPDEVESLVSCSDDNTLYLWRNNQNKCVERMTGHQNVVNDVKYSPDVKLIASASFDKSVRLWRASDGQYMATFRGHVQAVYTVAWSADSRLIVSGSKDSTLKVWSVQTKKLAQELPGHADEVFGVDWAPDGSRVASGGKDKVIKLWAY</sequence>
<name>NLE_DROME</name>
<protein>
    <recommendedName>
        <fullName evidence="7">Protein Notchless</fullName>
    </recommendedName>
</protein>
<evidence type="ECO:0000250" key="1"/>
<evidence type="ECO:0000250" key="2">
    <source>
        <dbReference type="UniProtKB" id="P25382"/>
    </source>
</evidence>
<evidence type="ECO:0000255" key="3"/>
<evidence type="ECO:0000256" key="4">
    <source>
        <dbReference type="SAM" id="MobiDB-lite"/>
    </source>
</evidence>
<evidence type="ECO:0000269" key="5">
    <source>
    </source>
</evidence>
<evidence type="ECO:0000269" key="6">
    <source>
    </source>
</evidence>
<evidence type="ECO:0000303" key="7">
    <source>
    </source>
</evidence>
<evidence type="ECO:0000305" key="8"/>
<evidence type="ECO:0000312" key="9">
    <source>
        <dbReference type="EMBL" id="AAF51479.2"/>
    </source>
</evidence>
<evidence type="ECO:0000312" key="10">
    <source>
        <dbReference type="EMBL" id="AAL90024.1"/>
    </source>
</evidence>
<evidence type="ECO:0000312" key="11">
    <source>
        <dbReference type="EMBL" id="CAA10070.1"/>
    </source>
</evidence>
<evidence type="ECO:0000312" key="12">
    <source>
        <dbReference type="FlyBase" id="FBgn0021874"/>
    </source>
</evidence>
<keyword id="KW-0914">Notch signaling pathway</keyword>
<keyword id="KW-0539">Nucleus</keyword>
<keyword id="KW-1185">Reference proteome</keyword>
<keyword id="KW-0677">Repeat</keyword>
<keyword id="KW-0853">WD repeat</keyword>